<organism>
    <name type="scientific">Arabidopsis thaliana</name>
    <name type="common">Mouse-ear cress</name>
    <dbReference type="NCBI Taxonomy" id="3702"/>
    <lineage>
        <taxon>Eukaryota</taxon>
        <taxon>Viridiplantae</taxon>
        <taxon>Streptophyta</taxon>
        <taxon>Embryophyta</taxon>
        <taxon>Tracheophyta</taxon>
        <taxon>Spermatophyta</taxon>
        <taxon>Magnoliopsida</taxon>
        <taxon>eudicotyledons</taxon>
        <taxon>Gunneridae</taxon>
        <taxon>Pentapetalae</taxon>
        <taxon>rosids</taxon>
        <taxon>malvids</taxon>
        <taxon>Brassicales</taxon>
        <taxon>Brassicaceae</taxon>
        <taxon>Camelineae</taxon>
        <taxon>Arabidopsis</taxon>
    </lineage>
</organism>
<comment type="function">
    <text evidence="1">Core subunit of the mitochondrial membrane respiratory chain NADH dehydrogenase (Complex I) that is believed to belong to the minimal assembly required for catalysis. Complex I functions in the transfer of electrons from NADH to the respiratory chain. The immediate electron acceptor for the enzyme is believed to be ubiquinone (By similarity). May donate electrons to ubiquinone.</text>
</comment>
<comment type="catalytic activity">
    <reaction>
        <text>a ubiquinone + NADH + 5 H(+)(in) = a ubiquinol + NAD(+) + 4 H(+)(out)</text>
        <dbReference type="Rhea" id="RHEA:29091"/>
        <dbReference type="Rhea" id="RHEA-COMP:9565"/>
        <dbReference type="Rhea" id="RHEA-COMP:9566"/>
        <dbReference type="ChEBI" id="CHEBI:15378"/>
        <dbReference type="ChEBI" id="CHEBI:16389"/>
        <dbReference type="ChEBI" id="CHEBI:17976"/>
        <dbReference type="ChEBI" id="CHEBI:57540"/>
        <dbReference type="ChEBI" id="CHEBI:57945"/>
        <dbReference type="EC" id="7.1.1.2"/>
    </reaction>
</comment>
<comment type="cofactor">
    <cofactor evidence="1">
        <name>[4Fe-4S] cluster</name>
        <dbReference type="ChEBI" id="CHEBI:49883"/>
    </cofactor>
    <text evidence="1">Binds 2 [4Fe-4S] clusters per subunit.</text>
</comment>
<comment type="subunit">
    <text>Complex I is composed of at least 49 different subunits. This is a component of the iron-sulfur (IP) fragment of the enzyme.</text>
</comment>
<comment type="subcellular location">
    <subcellularLocation>
        <location evidence="2">Mitochondrion</location>
    </subcellularLocation>
</comment>
<comment type="similarity">
    <text evidence="3">Belongs to the complex I 23 kDa subunit family.</text>
</comment>
<reference key="1">
    <citation type="journal article" date="2000" name="Nature">
        <title>Sequence and analysis of chromosome 1 of the plant Arabidopsis thaliana.</title>
        <authorList>
            <person name="Theologis A."/>
            <person name="Ecker J.R."/>
            <person name="Palm C.J."/>
            <person name="Federspiel N.A."/>
            <person name="Kaul S."/>
            <person name="White O."/>
            <person name="Alonso J."/>
            <person name="Altafi H."/>
            <person name="Araujo R."/>
            <person name="Bowman C.L."/>
            <person name="Brooks S.Y."/>
            <person name="Buehler E."/>
            <person name="Chan A."/>
            <person name="Chao Q."/>
            <person name="Chen H."/>
            <person name="Cheuk R.F."/>
            <person name="Chin C.W."/>
            <person name="Chung M.K."/>
            <person name="Conn L."/>
            <person name="Conway A.B."/>
            <person name="Conway A.R."/>
            <person name="Creasy T.H."/>
            <person name="Dewar K."/>
            <person name="Dunn P."/>
            <person name="Etgu P."/>
            <person name="Feldblyum T.V."/>
            <person name="Feng J.-D."/>
            <person name="Fong B."/>
            <person name="Fujii C.Y."/>
            <person name="Gill J.E."/>
            <person name="Goldsmith A.D."/>
            <person name="Haas B."/>
            <person name="Hansen N.F."/>
            <person name="Hughes B."/>
            <person name="Huizar L."/>
            <person name="Hunter J.L."/>
            <person name="Jenkins J."/>
            <person name="Johnson-Hopson C."/>
            <person name="Khan S."/>
            <person name="Khaykin E."/>
            <person name="Kim C.J."/>
            <person name="Koo H.L."/>
            <person name="Kremenetskaia I."/>
            <person name="Kurtz D.B."/>
            <person name="Kwan A."/>
            <person name="Lam B."/>
            <person name="Langin-Hooper S."/>
            <person name="Lee A."/>
            <person name="Lee J.M."/>
            <person name="Lenz C.A."/>
            <person name="Li J.H."/>
            <person name="Li Y.-P."/>
            <person name="Lin X."/>
            <person name="Liu S.X."/>
            <person name="Liu Z.A."/>
            <person name="Luros J.S."/>
            <person name="Maiti R."/>
            <person name="Marziali A."/>
            <person name="Militscher J."/>
            <person name="Miranda M."/>
            <person name="Nguyen M."/>
            <person name="Nierman W.C."/>
            <person name="Osborne B.I."/>
            <person name="Pai G."/>
            <person name="Peterson J."/>
            <person name="Pham P.K."/>
            <person name="Rizzo M."/>
            <person name="Rooney T."/>
            <person name="Rowley D."/>
            <person name="Sakano H."/>
            <person name="Salzberg S.L."/>
            <person name="Schwartz J.R."/>
            <person name="Shinn P."/>
            <person name="Southwick A.M."/>
            <person name="Sun H."/>
            <person name="Tallon L.J."/>
            <person name="Tambunga G."/>
            <person name="Toriumi M.J."/>
            <person name="Town C.D."/>
            <person name="Utterback T."/>
            <person name="Van Aken S."/>
            <person name="Vaysberg M."/>
            <person name="Vysotskaia V.S."/>
            <person name="Walker M."/>
            <person name="Wu D."/>
            <person name="Yu G."/>
            <person name="Fraser C.M."/>
            <person name="Venter J.C."/>
            <person name="Davis R.W."/>
        </authorList>
    </citation>
    <scope>NUCLEOTIDE SEQUENCE [LARGE SCALE GENOMIC DNA]</scope>
    <source>
        <strain>cv. Columbia</strain>
    </source>
</reference>
<reference key="2">
    <citation type="journal article" date="2017" name="Plant J.">
        <title>Araport11: a complete reannotation of the Arabidopsis thaliana reference genome.</title>
        <authorList>
            <person name="Cheng C.Y."/>
            <person name="Krishnakumar V."/>
            <person name="Chan A.P."/>
            <person name="Thibaud-Nissen F."/>
            <person name="Schobel S."/>
            <person name="Town C.D."/>
        </authorList>
    </citation>
    <scope>GENOME REANNOTATION</scope>
    <source>
        <strain>cv. Columbia</strain>
    </source>
</reference>
<reference key="3">
    <citation type="journal article" date="2003" name="Science">
        <title>Empirical analysis of transcriptional activity in the Arabidopsis genome.</title>
        <authorList>
            <person name="Yamada K."/>
            <person name="Lim J."/>
            <person name="Dale J.M."/>
            <person name="Chen H."/>
            <person name="Shinn P."/>
            <person name="Palm C.J."/>
            <person name="Southwick A.M."/>
            <person name="Wu H.C."/>
            <person name="Kim C.J."/>
            <person name="Nguyen M."/>
            <person name="Pham P.K."/>
            <person name="Cheuk R.F."/>
            <person name="Karlin-Newmann G."/>
            <person name="Liu S.X."/>
            <person name="Lam B."/>
            <person name="Sakano H."/>
            <person name="Wu T."/>
            <person name="Yu G."/>
            <person name="Miranda M."/>
            <person name="Quach H.L."/>
            <person name="Tripp M."/>
            <person name="Chang C.H."/>
            <person name="Lee J.M."/>
            <person name="Toriumi M.J."/>
            <person name="Chan M.M."/>
            <person name="Tang C.C."/>
            <person name="Onodera C.S."/>
            <person name="Deng J.M."/>
            <person name="Akiyama K."/>
            <person name="Ansari Y."/>
            <person name="Arakawa T."/>
            <person name="Banh J."/>
            <person name="Banno F."/>
            <person name="Bowser L."/>
            <person name="Brooks S.Y."/>
            <person name="Carninci P."/>
            <person name="Chao Q."/>
            <person name="Choy N."/>
            <person name="Enju A."/>
            <person name="Goldsmith A.D."/>
            <person name="Gurjal M."/>
            <person name="Hansen N.F."/>
            <person name="Hayashizaki Y."/>
            <person name="Johnson-Hopson C."/>
            <person name="Hsuan V.W."/>
            <person name="Iida K."/>
            <person name="Karnes M."/>
            <person name="Khan S."/>
            <person name="Koesema E."/>
            <person name="Ishida J."/>
            <person name="Jiang P.X."/>
            <person name="Jones T."/>
            <person name="Kawai J."/>
            <person name="Kamiya A."/>
            <person name="Meyers C."/>
            <person name="Nakajima M."/>
            <person name="Narusaka M."/>
            <person name="Seki M."/>
            <person name="Sakurai T."/>
            <person name="Satou M."/>
            <person name="Tamse R."/>
            <person name="Vaysberg M."/>
            <person name="Wallender E.K."/>
            <person name="Wong C."/>
            <person name="Yamamura Y."/>
            <person name="Yuan S."/>
            <person name="Shinozaki K."/>
            <person name="Davis R.W."/>
            <person name="Theologis A."/>
            <person name="Ecker J.R."/>
        </authorList>
    </citation>
    <scope>NUCLEOTIDE SEQUENCE [LARGE SCALE MRNA]</scope>
    <source>
        <strain>cv. Columbia</strain>
    </source>
</reference>
<reference key="4">
    <citation type="submission" date="2002-03" db="EMBL/GenBank/DDBJ databases">
        <title>Full-length cDNA from Arabidopsis thaliana.</title>
        <authorList>
            <person name="Brover V.V."/>
            <person name="Troukhan M.E."/>
            <person name="Alexandrov N.A."/>
            <person name="Lu Y.-P."/>
            <person name="Flavell R.B."/>
            <person name="Feldmann K.A."/>
        </authorList>
    </citation>
    <scope>NUCLEOTIDE SEQUENCE [LARGE SCALE MRNA]</scope>
</reference>
<reference key="5">
    <citation type="journal article" date="2004" name="Plant Cell">
        <title>Experimental analysis of the Arabidopsis mitochondrial proteome highlights signaling and regulatory components, provides assessment of targeting prediction programs, and indicates plant-specific mitochondrial proteins.</title>
        <authorList>
            <person name="Heazlewood J.L."/>
            <person name="Tonti-Filippini J.S."/>
            <person name="Gout A.M."/>
            <person name="Day D.A."/>
            <person name="Whelan J."/>
            <person name="Millar A.H."/>
        </authorList>
    </citation>
    <scope>IDENTIFICATION BY MASS SPECTROMETRY</scope>
    <scope>SUBCELLULAR LOCATION [LARGE SCALE ANALYSIS]</scope>
    <source>
        <strain>cv. Landsberg erecta</strain>
    </source>
</reference>
<dbReference type="EC" id="7.1.1.2"/>
<dbReference type="EMBL" id="AC011808">
    <property type="protein sequence ID" value="AAG10813.1"/>
    <property type="molecule type" value="Genomic_DNA"/>
</dbReference>
<dbReference type="EMBL" id="CP002684">
    <property type="protein sequence ID" value="AEE29484.1"/>
    <property type="molecule type" value="Genomic_DNA"/>
</dbReference>
<dbReference type="EMBL" id="AY059922">
    <property type="protein sequence ID" value="AAL24404.1"/>
    <property type="molecule type" value="mRNA"/>
</dbReference>
<dbReference type="EMBL" id="AY081631">
    <property type="protein sequence ID" value="AAM10193.1"/>
    <property type="molecule type" value="mRNA"/>
</dbReference>
<dbReference type="EMBL" id="AY085448">
    <property type="protein sequence ID" value="AAM62674.1"/>
    <property type="molecule type" value="mRNA"/>
</dbReference>
<dbReference type="PIR" id="C86302">
    <property type="entry name" value="C86302"/>
</dbReference>
<dbReference type="RefSeq" id="NP_173114.1">
    <property type="nucleotide sequence ID" value="NM_101530.4"/>
</dbReference>
<dbReference type="PDB" id="7A23">
    <property type="method" value="EM"/>
    <property type="resolution" value="3.70 A"/>
    <property type="chains" value="D=1-222"/>
</dbReference>
<dbReference type="PDB" id="7A24">
    <property type="method" value="EM"/>
    <property type="resolution" value="3.80 A"/>
    <property type="chains" value="D=1-222"/>
</dbReference>
<dbReference type="PDBsum" id="7A23"/>
<dbReference type="PDBsum" id="7A24"/>
<dbReference type="SMR" id="Q9FX83"/>
<dbReference type="BioGRID" id="23479">
    <property type="interactions" value="28"/>
</dbReference>
<dbReference type="FunCoup" id="Q9FX83">
    <property type="interactions" value="3655"/>
</dbReference>
<dbReference type="STRING" id="3702.Q9FX83"/>
<dbReference type="TCDB" id="3.D.1.6.3">
    <property type="family name" value="the h+ or na+-translocating nadh dehydrogenase (ndh) family"/>
</dbReference>
<dbReference type="PaxDb" id="3702-AT1G16700.1"/>
<dbReference type="ProteomicsDB" id="251252"/>
<dbReference type="EnsemblPlants" id="AT1G16700.1">
    <property type="protein sequence ID" value="AT1G16700.1"/>
    <property type="gene ID" value="AT1G16700"/>
</dbReference>
<dbReference type="GeneID" id="838239"/>
<dbReference type="Gramene" id="AT1G16700.1">
    <property type="protein sequence ID" value="AT1G16700.1"/>
    <property type="gene ID" value="AT1G16700"/>
</dbReference>
<dbReference type="KEGG" id="ath:AT1G16700"/>
<dbReference type="Araport" id="AT1G16700"/>
<dbReference type="TAIR" id="AT1G16700"/>
<dbReference type="eggNOG" id="KOG3256">
    <property type="taxonomic scope" value="Eukaryota"/>
</dbReference>
<dbReference type="HOGENOM" id="CLU_067218_5_0_1"/>
<dbReference type="InParanoid" id="Q9FX83"/>
<dbReference type="OMA" id="QFFRAPY"/>
<dbReference type="OrthoDB" id="204405at2759"/>
<dbReference type="PhylomeDB" id="Q9FX83"/>
<dbReference type="BioCyc" id="ARA:AT1G16700-MONOMER"/>
<dbReference type="PRO" id="PR:Q9FX83"/>
<dbReference type="Proteomes" id="UP000006548">
    <property type="component" value="Chromosome 1"/>
</dbReference>
<dbReference type="ExpressionAtlas" id="Q9FX83">
    <property type="expression patterns" value="baseline and differential"/>
</dbReference>
<dbReference type="GO" id="GO:0016020">
    <property type="term" value="C:membrane"/>
    <property type="evidence" value="ECO:0007669"/>
    <property type="project" value="InterPro"/>
</dbReference>
<dbReference type="GO" id="GO:0005739">
    <property type="term" value="C:mitochondrion"/>
    <property type="evidence" value="ECO:0000314"/>
    <property type="project" value="TAIR"/>
</dbReference>
<dbReference type="GO" id="GO:0005634">
    <property type="term" value="C:nucleus"/>
    <property type="evidence" value="ECO:0007005"/>
    <property type="project" value="TAIR"/>
</dbReference>
<dbReference type="GO" id="GO:0051539">
    <property type="term" value="F:4 iron, 4 sulfur cluster binding"/>
    <property type="evidence" value="ECO:0007669"/>
    <property type="project" value="UniProtKB-KW"/>
</dbReference>
<dbReference type="GO" id="GO:0046872">
    <property type="term" value="F:metal ion binding"/>
    <property type="evidence" value="ECO:0000314"/>
    <property type="project" value="TAIR"/>
</dbReference>
<dbReference type="GO" id="GO:0008137">
    <property type="term" value="F:NADH dehydrogenase (ubiquinone) activity"/>
    <property type="evidence" value="ECO:0007669"/>
    <property type="project" value="UniProtKB-EC"/>
</dbReference>
<dbReference type="FunFam" id="3.30.70.3270:FF:000001">
    <property type="entry name" value="NADH-quinone oxidoreductase subunit I 1"/>
    <property type="match status" value="1"/>
</dbReference>
<dbReference type="Gene3D" id="3.30.70.3270">
    <property type="match status" value="1"/>
</dbReference>
<dbReference type="HAMAP" id="MF_01351">
    <property type="entry name" value="NDH1_NuoI"/>
    <property type="match status" value="1"/>
</dbReference>
<dbReference type="InterPro" id="IPR017896">
    <property type="entry name" value="4Fe4S_Fe-S-bd"/>
</dbReference>
<dbReference type="InterPro" id="IPR017900">
    <property type="entry name" value="4Fe4S_Fe_S_CS"/>
</dbReference>
<dbReference type="InterPro" id="IPR010226">
    <property type="entry name" value="NADH_quinone_OxRdtase_chainI"/>
</dbReference>
<dbReference type="NCBIfam" id="TIGR01971">
    <property type="entry name" value="NuoI"/>
    <property type="match status" value="1"/>
</dbReference>
<dbReference type="NCBIfam" id="NF004538">
    <property type="entry name" value="PRK05888.1-4"/>
    <property type="match status" value="1"/>
</dbReference>
<dbReference type="NCBIfam" id="NF004539">
    <property type="entry name" value="PRK05888.1-5"/>
    <property type="match status" value="1"/>
</dbReference>
<dbReference type="PANTHER" id="PTHR10849:SF20">
    <property type="entry name" value="NADH DEHYDROGENASE [UBIQUINONE] IRON-SULFUR PROTEIN 8, MITOCHONDRIAL"/>
    <property type="match status" value="1"/>
</dbReference>
<dbReference type="PANTHER" id="PTHR10849">
    <property type="entry name" value="NADH DEHYDROGENASE UBIQUINONE IRON-SULFUR PROTEIN 8, MITOCHONDRIAL"/>
    <property type="match status" value="1"/>
</dbReference>
<dbReference type="Pfam" id="PF12838">
    <property type="entry name" value="Fer4_7"/>
    <property type="match status" value="1"/>
</dbReference>
<dbReference type="SUPFAM" id="SSF54862">
    <property type="entry name" value="4Fe-4S ferredoxins"/>
    <property type="match status" value="1"/>
</dbReference>
<dbReference type="PROSITE" id="PS00198">
    <property type="entry name" value="4FE4S_FER_1"/>
    <property type="match status" value="2"/>
</dbReference>
<dbReference type="PROSITE" id="PS51379">
    <property type="entry name" value="4FE4S_FER_2"/>
    <property type="match status" value="2"/>
</dbReference>
<name>NDS8B_ARATH</name>
<evidence type="ECO:0000250" key="1"/>
<evidence type="ECO:0000269" key="2">
    <source>
    </source>
</evidence>
<evidence type="ECO:0000305" key="3"/>
<gene>
    <name type="ordered locus">At1g16700</name>
    <name type="ORF">F19K19.1</name>
</gene>
<sequence>MASLLARRSFSALRARHLAFSGQGLQGSHLCGLQSRAISYGSNKDDEEAEQLAKEISKDWSTVFERSMNTLFLTEMVRGLSLTLKYFFDPKVTINYPFEKGPLSPRFRGEHALRRYPTGEERCIACKLCEAVCPAQAITIEAEEREDGSRRTTRYDIDMTKCIYCGFCQEACPVDAIVEGPNFEFATETHEELLYDKEKLLENGDRWETEIAENLRSESLYR</sequence>
<keyword id="KW-0002">3D-structure</keyword>
<keyword id="KW-0004">4Fe-4S</keyword>
<keyword id="KW-0249">Electron transport</keyword>
<keyword id="KW-0408">Iron</keyword>
<keyword id="KW-0411">Iron-sulfur</keyword>
<keyword id="KW-0479">Metal-binding</keyword>
<keyword id="KW-0496">Mitochondrion</keyword>
<keyword id="KW-0520">NAD</keyword>
<keyword id="KW-0560">Oxidoreductase</keyword>
<keyword id="KW-1185">Reference proteome</keyword>
<keyword id="KW-0677">Repeat</keyword>
<keyword id="KW-0679">Respiratory chain</keyword>
<keyword id="KW-0809">Transit peptide</keyword>
<keyword id="KW-1278">Translocase</keyword>
<keyword id="KW-0813">Transport</keyword>
<keyword id="KW-0830">Ubiquinone</keyword>
<protein>
    <recommendedName>
        <fullName>NADH dehydrogenase [ubiquinone] iron-sulfur protein 8-B, mitochondrial</fullName>
        <ecNumber>7.1.1.2</ecNumber>
    </recommendedName>
</protein>
<proteinExistence type="evidence at protein level"/>
<accession>Q9FX83</accession>
<feature type="transit peptide" description="Mitochondrion" evidence="1">
    <location>
        <begin position="1"/>
        <end status="unknown"/>
    </location>
</feature>
<feature type="chain" id="PRO_0000410498" description="NADH dehydrogenase [ubiquinone] iron-sulfur protein 8-B, mitochondrial">
    <location>
        <begin status="unknown"/>
        <end position="222"/>
    </location>
</feature>
<feature type="domain" description="4Fe-4S ferredoxin-type 1">
    <location>
        <begin position="114"/>
        <end position="143"/>
    </location>
</feature>
<feature type="domain" description="4Fe-4S ferredoxin-type 2">
    <location>
        <begin position="153"/>
        <end position="182"/>
    </location>
</feature>
<feature type="binding site" evidence="1">
    <location>
        <position position="123"/>
    </location>
    <ligand>
        <name>[4Fe-4S] cluster</name>
        <dbReference type="ChEBI" id="CHEBI:49883"/>
        <label>1</label>
    </ligand>
</feature>
<feature type="binding site" evidence="1">
    <location>
        <position position="126"/>
    </location>
    <ligand>
        <name>[4Fe-4S] cluster</name>
        <dbReference type="ChEBI" id="CHEBI:49883"/>
        <label>1</label>
    </ligand>
</feature>
<feature type="binding site" evidence="1">
    <location>
        <position position="129"/>
    </location>
    <ligand>
        <name>[4Fe-4S] cluster</name>
        <dbReference type="ChEBI" id="CHEBI:49883"/>
        <label>1</label>
    </ligand>
</feature>
<feature type="binding site" evidence="1">
    <location>
        <position position="133"/>
    </location>
    <ligand>
        <name>[4Fe-4S] cluster</name>
        <dbReference type="ChEBI" id="CHEBI:49883"/>
        <label>2</label>
    </ligand>
</feature>
<feature type="binding site" evidence="1">
    <location>
        <position position="162"/>
    </location>
    <ligand>
        <name>[4Fe-4S] cluster</name>
        <dbReference type="ChEBI" id="CHEBI:49883"/>
        <label>2</label>
    </ligand>
</feature>
<feature type="binding site" evidence="1">
    <location>
        <position position="165"/>
    </location>
    <ligand>
        <name>[4Fe-4S] cluster</name>
        <dbReference type="ChEBI" id="CHEBI:49883"/>
        <label>2</label>
    </ligand>
</feature>
<feature type="binding site" evidence="1">
    <location>
        <position position="168"/>
    </location>
    <ligand>
        <name>[4Fe-4S] cluster</name>
        <dbReference type="ChEBI" id="CHEBI:49883"/>
        <label>2</label>
    </ligand>
</feature>
<feature type="binding site" evidence="1">
    <location>
        <position position="172"/>
    </location>
    <ligand>
        <name>[4Fe-4S] cluster</name>
        <dbReference type="ChEBI" id="CHEBI:49883"/>
        <label>1</label>
    </ligand>
</feature>